<evidence type="ECO:0000255" key="1"/>
<evidence type="ECO:0000255" key="2">
    <source>
        <dbReference type="PROSITE-ProRule" id="PRU00143"/>
    </source>
</evidence>
<evidence type="ECO:0000256" key="3">
    <source>
        <dbReference type="SAM" id="MobiDB-lite"/>
    </source>
</evidence>
<evidence type="ECO:0000269" key="4">
    <source>
    </source>
</evidence>
<evidence type="ECO:0000303" key="5">
    <source>
    </source>
</evidence>
<evidence type="ECO:0000305" key="6"/>
<evidence type="ECO:0000312" key="7">
    <source>
        <dbReference type="Proteomes" id="UP000001940"/>
    </source>
</evidence>
<evidence type="ECO:0000312" key="8">
    <source>
        <dbReference type="WormBase" id="T21C9.1a"/>
    </source>
</evidence>
<name>MICS1_CAEEL</name>
<keyword id="KW-0472">Membrane</keyword>
<keyword id="KW-1185">Reference proteome</keyword>
<keyword id="KW-0812">Transmembrane</keyword>
<keyword id="KW-1133">Transmembrane helix</keyword>
<dbReference type="EMBL" id="BX284605">
    <property type="protein sequence ID" value="CAA97330.2"/>
    <property type="molecule type" value="Genomic_DNA"/>
</dbReference>
<dbReference type="PIR" id="D89193">
    <property type="entry name" value="D89193"/>
</dbReference>
<dbReference type="PIR" id="T25079">
    <property type="entry name" value="T25079"/>
</dbReference>
<dbReference type="RefSeq" id="NP_505712.1">
    <property type="nucleotide sequence ID" value="NM_073311.3"/>
</dbReference>
<dbReference type="SMR" id="Q22638"/>
<dbReference type="FunCoup" id="Q22638">
    <property type="interactions" value="208"/>
</dbReference>
<dbReference type="STRING" id="6239.T21C9.1b.1"/>
<dbReference type="PaxDb" id="6239-T21C9.1"/>
<dbReference type="PeptideAtlas" id="Q22638"/>
<dbReference type="EnsemblMetazoa" id="T21C9.1a.1">
    <property type="protein sequence ID" value="T21C9.1a.1"/>
    <property type="gene ID" value="WBGene00011890"/>
</dbReference>
<dbReference type="GeneID" id="179475"/>
<dbReference type="KEGG" id="cel:CELE_T21C9.1"/>
<dbReference type="UCSC" id="T21C9.1">
    <property type="organism name" value="c. elegans"/>
</dbReference>
<dbReference type="AGR" id="WB:WBGene00011890"/>
<dbReference type="CTD" id="179475"/>
<dbReference type="WormBase" id="T21C9.1a">
    <property type="protein sequence ID" value="CE23996"/>
    <property type="gene ID" value="WBGene00011890"/>
    <property type="gene designation" value="mics-1"/>
</dbReference>
<dbReference type="eggNOG" id="KOG3528">
    <property type="taxonomic scope" value="Eukaryota"/>
</dbReference>
<dbReference type="HOGENOM" id="CLU_1035257_0_0_1"/>
<dbReference type="InParanoid" id="Q22638"/>
<dbReference type="OMA" id="WITEALY"/>
<dbReference type="OrthoDB" id="123971at2759"/>
<dbReference type="PhylomeDB" id="Q22638"/>
<dbReference type="PRO" id="PR:Q22638"/>
<dbReference type="Proteomes" id="UP000001940">
    <property type="component" value="Chromosome V"/>
</dbReference>
<dbReference type="Bgee" id="WBGene00011890">
    <property type="expression patterns" value="Expressed in embryo and 4 other cell types or tissues"/>
</dbReference>
<dbReference type="ExpressionAtlas" id="Q22638">
    <property type="expression patterns" value="baseline and differential"/>
</dbReference>
<dbReference type="GO" id="GO:0016020">
    <property type="term" value="C:membrane"/>
    <property type="evidence" value="ECO:0007669"/>
    <property type="project" value="UniProtKB-SubCell"/>
</dbReference>
<dbReference type="Gene3D" id="2.30.42.10">
    <property type="match status" value="1"/>
</dbReference>
<dbReference type="InterPro" id="IPR001478">
    <property type="entry name" value="PDZ"/>
</dbReference>
<dbReference type="InterPro" id="IPR036034">
    <property type="entry name" value="PDZ_sf"/>
</dbReference>
<dbReference type="InterPro" id="IPR050614">
    <property type="entry name" value="Synaptic_Scaffolding_LAP-MAGUK"/>
</dbReference>
<dbReference type="PANTHER" id="PTHR23119">
    <property type="entry name" value="DISCS LARGE"/>
    <property type="match status" value="1"/>
</dbReference>
<dbReference type="PANTHER" id="PTHR23119:SF51">
    <property type="entry name" value="DISKS LARGE 1 TUMOR SUPPRESSOR PROTEIN"/>
    <property type="match status" value="1"/>
</dbReference>
<dbReference type="Pfam" id="PF00595">
    <property type="entry name" value="PDZ"/>
    <property type="match status" value="1"/>
</dbReference>
<dbReference type="SMART" id="SM00228">
    <property type="entry name" value="PDZ"/>
    <property type="match status" value="1"/>
</dbReference>
<dbReference type="SUPFAM" id="SSF50156">
    <property type="entry name" value="PDZ domain-like"/>
    <property type="match status" value="1"/>
</dbReference>
<dbReference type="PROSITE" id="PS50106">
    <property type="entry name" value="PDZ"/>
    <property type="match status" value="1"/>
</dbReference>
<gene>
    <name evidence="5 8" type="primary">mics-1</name>
    <name evidence="8" type="ORF">T21C9.1</name>
</gene>
<proteinExistence type="inferred from homology"/>
<reference evidence="7" key="1">
    <citation type="journal article" date="1998" name="Science">
        <title>Genome sequence of the nematode C. elegans: a platform for investigating biology.</title>
        <authorList>
            <consortium name="The C. elegans sequencing consortium"/>
        </authorList>
    </citation>
    <scope>NUCLEOTIDE SEQUENCE [LARGE SCALE GENOMIC DNA]</scope>
    <source>
        <strain evidence="7">Bristol N2</strain>
    </source>
</reference>
<reference evidence="6" key="2">
    <citation type="journal article" date="2012" name="Exp. Gerontol.">
        <title>MICS-1 interacts with mitochondrial ATAD-3 and modulates lifespan in C. elegans.</title>
        <authorList>
            <person name="Hoffmann M."/>
            <person name="Honnen S."/>
            <person name="Mayatepek E."/>
            <person name="Waetjen W."/>
            <person name="Koopman W.J."/>
            <person name="Bossinger O."/>
            <person name="Distelmaier F."/>
        </authorList>
    </citation>
    <scope>FUNCTION</scope>
    <scope>DISRUPTION PHENOTYPE</scope>
</reference>
<protein>
    <recommendedName>
        <fullName evidence="5">Mitochondrial scaffolding protein 1</fullName>
    </recommendedName>
</protein>
<organism evidence="7">
    <name type="scientific">Caenorhabditis elegans</name>
    <dbReference type="NCBI Taxonomy" id="6239"/>
    <lineage>
        <taxon>Eukaryota</taxon>
        <taxon>Metazoa</taxon>
        <taxon>Ecdysozoa</taxon>
        <taxon>Nematoda</taxon>
        <taxon>Chromadorea</taxon>
        <taxon>Rhabditida</taxon>
        <taxon>Rhabditina</taxon>
        <taxon>Rhabditomorpha</taxon>
        <taxon>Rhabditoidea</taxon>
        <taxon>Rhabditidae</taxon>
        <taxon>Peloderinae</taxon>
        <taxon>Caenorhabditis</taxon>
    </lineage>
</organism>
<feature type="chain" id="PRO_0000441868" description="Mitochondrial scaffolding protein 1" evidence="6">
    <location>
        <begin position="1"/>
        <end position="269"/>
    </location>
</feature>
<feature type="transmembrane region" description="Helical" evidence="1">
    <location>
        <begin position="240"/>
        <end position="262"/>
    </location>
</feature>
<feature type="domain" description="PDZ" evidence="2">
    <location>
        <begin position="49"/>
        <end position="121"/>
    </location>
</feature>
<feature type="region of interest" description="Disordered" evidence="3">
    <location>
        <begin position="143"/>
        <end position="185"/>
    </location>
</feature>
<feature type="compositionally biased region" description="Polar residues" evidence="3">
    <location>
        <begin position="145"/>
        <end position="174"/>
    </location>
</feature>
<accession>Q22638</accession>
<sequence length="269" mass="29730">MMVSPPQEDTVFNTDSDPVYEQATDDMTFNDTTTDGNGQESVPLEALTVVEIEKTSKGFGFNIVGGTDNPHFVGDIGIYVSSVNSESKSYGVVRTGDKILSFDGIDMTYKTHDEAVEVFRSVKIGHVAKMLIDREYLHLQEDRTQTPTASVSITPQVTPQTRSTQNNTDTPKSMSHSESKSRLTSHGLSAVIERIRGKVYEEEDAQSVTSYAPSTHSIIDDVPRTPRKPLSLLDPRNNSWLTEALYVSIGLGALTISGYLAYRFIRGRR</sequence>
<comment type="function">
    <text evidence="4">Plays a role in the regulation of lifespan in a partially daf-16-mediated manner, and may be involved in regulating the levels of reactive oxygen species production in response to heat stress.</text>
</comment>
<comment type="subcellular location">
    <subcellularLocation>
        <location evidence="1">Membrane</location>
        <topology evidence="1">Single-pass membrane protein</topology>
    </subcellularLocation>
</comment>
<comment type="disruption phenotype">
    <text evidence="4">RNAi-mediated knockdown in young adults results in an increased adult lifespan. At 37 degrees Celsius, levels of reactive oxygen species are reduced compared to wild-type animals. Double knockout with atad-3 RNAi results in an enhanced increase in adult lifespan as compared to the single mutants and wild-type animals.</text>
</comment>
<comment type="caution">
    <text evidence="4 6">Has been shown to interact (via PDZ domain) with atad-3 (via C-terminus) (PubMed:22245785). The physiological significance of this interaction is uncertain; the atad-3 C-terminus is expected to be within the mitochondrial matrix.</text>
</comment>